<reference key="1">
    <citation type="journal article" date="2010" name="J. Proteome Res.">
        <title>Molecular diversification of peptide toxins from the tarantula Haplopelma hainanum (Ornithoctonus hainana) venom based on transcriptomic, peptidomic, and genomic analyses.</title>
        <authorList>
            <person name="Tang X."/>
            <person name="Zhang Y."/>
            <person name="Hu W."/>
            <person name="Xu D."/>
            <person name="Tao H."/>
            <person name="Yang X."/>
            <person name="Li Y."/>
            <person name="Jiang L."/>
            <person name="Liang S."/>
        </authorList>
    </citation>
    <scope>NUCLEOTIDE SEQUENCE [LARGE SCALE GENOMIC DNA]</scope>
    <scope>PROTEIN SEQUENCE OF 53-85</scope>
    <scope>IDENTIFICATION BY MASS SPECTROMETRY</scope>
    <source>
        <tissue>Venom</tissue>
        <tissue>Venom gland</tissue>
    </source>
</reference>
<comment type="function">
    <text evidence="1">Ion channel inhibitor.</text>
</comment>
<comment type="subcellular location">
    <subcellularLocation>
        <location>Secreted</location>
    </subcellularLocation>
</comment>
<comment type="tissue specificity">
    <text>Expressed by the venom gland.</text>
</comment>
<comment type="domain">
    <text evidence="1">The presence of a 'disulfide through disulfide knot' structurally defines this protein as a knottin.</text>
</comment>
<comment type="similarity">
    <text evidence="5">Belongs to the neurotoxin 10 (Hwtx-1) family. 51 (Hntx-8) subfamily. Hntx-8 sub-subfamily.</text>
</comment>
<evidence type="ECO:0000250" key="1"/>
<evidence type="ECO:0000250" key="2">
    <source>
        <dbReference type="UniProtKB" id="B3FIS6"/>
    </source>
</evidence>
<evidence type="ECO:0000255" key="3"/>
<evidence type="ECO:0000269" key="4">
    <source>
    </source>
</evidence>
<evidence type="ECO:0000305" key="5"/>
<feature type="signal peptide" evidence="3">
    <location>
        <begin position="1"/>
        <end position="24"/>
    </location>
</feature>
<feature type="propeptide" id="PRO_0000400601" evidence="4">
    <location>
        <begin position="25"/>
        <end position="52"/>
    </location>
</feature>
<feature type="peptide" id="PRO_0000400602" description="U3-theraphotoxin-Hhn1a 12">
    <location>
        <begin position="53"/>
        <end position="87"/>
    </location>
</feature>
<feature type="disulfide bond" evidence="2">
    <location>
        <begin position="54"/>
        <end position="67"/>
    </location>
</feature>
<feature type="disulfide bond" evidence="2">
    <location>
        <begin position="61"/>
        <end position="72"/>
    </location>
</feature>
<feature type="disulfide bond" evidence="2">
    <location>
        <begin position="66"/>
        <end position="79"/>
    </location>
</feature>
<accession>D2Y2M1</accession>
<dbReference type="EMBL" id="GU293098">
    <property type="protein sequence ID" value="ADB56914.1"/>
    <property type="molecule type" value="Genomic_DNA"/>
</dbReference>
<dbReference type="SMR" id="D2Y2M1"/>
<dbReference type="ArachnoServer" id="AS001657">
    <property type="toxin name" value="U3-theraphotoxin-Hhn1a"/>
</dbReference>
<dbReference type="GO" id="GO:0005576">
    <property type="term" value="C:extracellular region"/>
    <property type="evidence" value="ECO:0007669"/>
    <property type="project" value="UniProtKB-SubCell"/>
</dbReference>
<dbReference type="GO" id="GO:0008200">
    <property type="term" value="F:ion channel inhibitor activity"/>
    <property type="evidence" value="ECO:0007669"/>
    <property type="project" value="InterPro"/>
</dbReference>
<dbReference type="GO" id="GO:0090729">
    <property type="term" value="F:toxin activity"/>
    <property type="evidence" value="ECO:0007669"/>
    <property type="project" value="UniProtKB-KW"/>
</dbReference>
<dbReference type="InterPro" id="IPR011696">
    <property type="entry name" value="Huwentoxin-1"/>
</dbReference>
<dbReference type="InterPro" id="IPR013140">
    <property type="entry name" value="Huwentoxin_CS1"/>
</dbReference>
<dbReference type="Pfam" id="PF07740">
    <property type="entry name" value="Toxin_12"/>
    <property type="match status" value="1"/>
</dbReference>
<dbReference type="SUPFAM" id="SSF57059">
    <property type="entry name" value="omega toxin-like"/>
    <property type="match status" value="1"/>
</dbReference>
<dbReference type="PROSITE" id="PS60021">
    <property type="entry name" value="HWTX_1"/>
    <property type="match status" value="1"/>
</dbReference>
<keyword id="KW-0903">Direct protein sequencing</keyword>
<keyword id="KW-1015">Disulfide bond</keyword>
<keyword id="KW-0872">Ion channel impairing toxin</keyword>
<keyword id="KW-0960">Knottin</keyword>
<keyword id="KW-0964">Secreted</keyword>
<keyword id="KW-0732">Signal</keyword>
<keyword id="KW-0800">Toxin</keyword>
<sequence>MVNMKASMFLTFAGLVLLFVVCYASESEEKEFPKEMLSSIFAVDKDFKQEERDCAGYMRECKEKLCCSGYVCSSRWKWCVLPAPWRR</sequence>
<organism>
    <name type="scientific">Cyriopagopus hainanus</name>
    <name type="common">Chinese bird spider</name>
    <name type="synonym">Haplopelma hainanum</name>
    <dbReference type="NCBI Taxonomy" id="209901"/>
    <lineage>
        <taxon>Eukaryota</taxon>
        <taxon>Metazoa</taxon>
        <taxon>Ecdysozoa</taxon>
        <taxon>Arthropoda</taxon>
        <taxon>Chelicerata</taxon>
        <taxon>Arachnida</taxon>
        <taxon>Araneae</taxon>
        <taxon>Mygalomorphae</taxon>
        <taxon>Theraphosidae</taxon>
        <taxon>Haplopelma</taxon>
    </lineage>
</organism>
<name>H8A12_CYRHA</name>
<proteinExistence type="evidence at protein level"/>
<protein>
    <recommendedName>
        <fullName>U3-theraphotoxin-Hhn1a 12</fullName>
        <shortName>U3-TRTX-Hhn1a</shortName>
    </recommendedName>
    <alternativeName>
        <fullName>Hainantoxin-VIII.12</fullName>
        <shortName>HNTX-VIII.12</shortName>
    </alternativeName>
    <alternativeName>
        <fullName>Peptide F4-27.90</fullName>
    </alternativeName>
</protein>